<gene>
    <name evidence="1" type="primary">rpsQ</name>
    <name type="ordered locus">Nwi_1373</name>
</gene>
<feature type="chain" id="PRO_0000233519" description="Small ribosomal subunit protein uS17">
    <location>
        <begin position="1"/>
        <end position="82"/>
    </location>
</feature>
<accession>Q3SSV7</accession>
<keyword id="KW-1185">Reference proteome</keyword>
<keyword id="KW-0687">Ribonucleoprotein</keyword>
<keyword id="KW-0689">Ribosomal protein</keyword>
<keyword id="KW-0694">RNA-binding</keyword>
<keyword id="KW-0699">rRNA-binding</keyword>
<proteinExistence type="inferred from homology"/>
<reference key="1">
    <citation type="journal article" date="2006" name="Appl. Environ. Microbiol.">
        <title>Genome sequence of the chemolithoautotrophic nitrite-oxidizing bacterium Nitrobacter winogradskyi Nb-255.</title>
        <authorList>
            <person name="Starkenburg S.R."/>
            <person name="Chain P.S.G."/>
            <person name="Sayavedra-Soto L.A."/>
            <person name="Hauser L."/>
            <person name="Land M.L."/>
            <person name="Larimer F.W."/>
            <person name="Malfatti S.A."/>
            <person name="Klotz M.G."/>
            <person name="Bottomley P.J."/>
            <person name="Arp D.J."/>
            <person name="Hickey W.J."/>
        </authorList>
    </citation>
    <scope>NUCLEOTIDE SEQUENCE [LARGE SCALE GENOMIC DNA]</scope>
    <source>
        <strain>ATCC 25391 / DSM 10237 / CIP 104748 / NCIMB 11846 / Nb-255</strain>
    </source>
</reference>
<dbReference type="EMBL" id="CP000115">
    <property type="protein sequence ID" value="ABA04634.1"/>
    <property type="molecule type" value="Genomic_DNA"/>
</dbReference>
<dbReference type="RefSeq" id="WP_011314648.1">
    <property type="nucleotide sequence ID" value="NC_007406.1"/>
</dbReference>
<dbReference type="SMR" id="Q3SSV7"/>
<dbReference type="STRING" id="323098.Nwi_1373"/>
<dbReference type="KEGG" id="nwi:Nwi_1373"/>
<dbReference type="eggNOG" id="COG0186">
    <property type="taxonomic scope" value="Bacteria"/>
</dbReference>
<dbReference type="HOGENOM" id="CLU_073626_1_1_5"/>
<dbReference type="OrthoDB" id="9811714at2"/>
<dbReference type="Proteomes" id="UP000002531">
    <property type="component" value="Chromosome"/>
</dbReference>
<dbReference type="GO" id="GO:0022627">
    <property type="term" value="C:cytosolic small ribosomal subunit"/>
    <property type="evidence" value="ECO:0007669"/>
    <property type="project" value="TreeGrafter"/>
</dbReference>
<dbReference type="GO" id="GO:0019843">
    <property type="term" value="F:rRNA binding"/>
    <property type="evidence" value="ECO:0007669"/>
    <property type="project" value="UniProtKB-UniRule"/>
</dbReference>
<dbReference type="GO" id="GO:0003735">
    <property type="term" value="F:structural constituent of ribosome"/>
    <property type="evidence" value="ECO:0007669"/>
    <property type="project" value="InterPro"/>
</dbReference>
<dbReference type="GO" id="GO:0006412">
    <property type="term" value="P:translation"/>
    <property type="evidence" value="ECO:0007669"/>
    <property type="project" value="UniProtKB-UniRule"/>
</dbReference>
<dbReference type="CDD" id="cd00364">
    <property type="entry name" value="Ribosomal_uS17"/>
    <property type="match status" value="1"/>
</dbReference>
<dbReference type="FunFam" id="2.40.50.140:FF:000204">
    <property type="entry name" value="30S ribosomal protein S17"/>
    <property type="match status" value="1"/>
</dbReference>
<dbReference type="Gene3D" id="2.40.50.140">
    <property type="entry name" value="Nucleic acid-binding proteins"/>
    <property type="match status" value="1"/>
</dbReference>
<dbReference type="HAMAP" id="MF_01345_B">
    <property type="entry name" value="Ribosomal_uS17_B"/>
    <property type="match status" value="1"/>
</dbReference>
<dbReference type="InterPro" id="IPR012340">
    <property type="entry name" value="NA-bd_OB-fold"/>
</dbReference>
<dbReference type="InterPro" id="IPR000266">
    <property type="entry name" value="Ribosomal_uS17"/>
</dbReference>
<dbReference type="InterPro" id="IPR019984">
    <property type="entry name" value="Ribosomal_uS17_bact/chlr"/>
</dbReference>
<dbReference type="InterPro" id="IPR019979">
    <property type="entry name" value="Ribosomal_uS17_CS"/>
</dbReference>
<dbReference type="NCBIfam" id="NF004123">
    <property type="entry name" value="PRK05610.1"/>
    <property type="match status" value="1"/>
</dbReference>
<dbReference type="NCBIfam" id="TIGR03635">
    <property type="entry name" value="uS17_bact"/>
    <property type="match status" value="1"/>
</dbReference>
<dbReference type="PANTHER" id="PTHR10744">
    <property type="entry name" value="40S RIBOSOMAL PROTEIN S11 FAMILY MEMBER"/>
    <property type="match status" value="1"/>
</dbReference>
<dbReference type="PANTHER" id="PTHR10744:SF1">
    <property type="entry name" value="SMALL RIBOSOMAL SUBUNIT PROTEIN US17M"/>
    <property type="match status" value="1"/>
</dbReference>
<dbReference type="Pfam" id="PF00366">
    <property type="entry name" value="Ribosomal_S17"/>
    <property type="match status" value="1"/>
</dbReference>
<dbReference type="PRINTS" id="PR00973">
    <property type="entry name" value="RIBOSOMALS17"/>
</dbReference>
<dbReference type="SUPFAM" id="SSF50249">
    <property type="entry name" value="Nucleic acid-binding proteins"/>
    <property type="match status" value="1"/>
</dbReference>
<dbReference type="PROSITE" id="PS00056">
    <property type="entry name" value="RIBOSOMAL_S17"/>
    <property type="match status" value="1"/>
</dbReference>
<protein>
    <recommendedName>
        <fullName evidence="1">Small ribosomal subunit protein uS17</fullName>
    </recommendedName>
    <alternativeName>
        <fullName evidence="2">30S ribosomal protein S17</fullName>
    </alternativeName>
</protein>
<evidence type="ECO:0000255" key="1">
    <source>
        <dbReference type="HAMAP-Rule" id="MF_01345"/>
    </source>
</evidence>
<evidence type="ECO:0000305" key="2"/>
<organism>
    <name type="scientific">Nitrobacter winogradskyi (strain ATCC 25391 / DSM 10237 / CIP 104748 / NCIMB 11846 / Nb-255)</name>
    <dbReference type="NCBI Taxonomy" id="323098"/>
    <lineage>
        <taxon>Bacteria</taxon>
        <taxon>Pseudomonadati</taxon>
        <taxon>Pseudomonadota</taxon>
        <taxon>Alphaproteobacteria</taxon>
        <taxon>Hyphomicrobiales</taxon>
        <taxon>Nitrobacteraceae</taxon>
        <taxon>Nitrobacter</taxon>
    </lineage>
</organism>
<name>RS17_NITWN</name>
<comment type="function">
    <text evidence="1">One of the primary rRNA binding proteins, it binds specifically to the 5'-end of 16S ribosomal RNA.</text>
</comment>
<comment type="subunit">
    <text evidence="1">Part of the 30S ribosomal subunit.</text>
</comment>
<comment type="similarity">
    <text evidence="1">Belongs to the universal ribosomal protein uS17 family.</text>
</comment>
<sequence length="82" mass="9731">MPKRTLQGVVVSDKQAKTVVVRVDRRFTHPIYKKTIRRSKNYHAHDENNEFKPGDMVWIEESKPISKLKRWTVVRGEQRKTA</sequence>